<protein>
    <recommendedName>
        <fullName evidence="4">Uncharacterized membrane protein</fullName>
    </recommendedName>
</protein>
<reference evidence="5" key="1">
    <citation type="journal article" date="2002" name="Nature">
        <title>Genome sequence of the human malaria parasite Plasmodium falciparum.</title>
        <authorList>
            <person name="Gardner M.J."/>
            <person name="Hall N."/>
            <person name="Fung E."/>
            <person name="White O."/>
            <person name="Berriman M."/>
            <person name="Hyman R.W."/>
            <person name="Carlton J.M."/>
            <person name="Pain A."/>
            <person name="Nelson K.E."/>
            <person name="Bowman S."/>
            <person name="Paulsen I.T."/>
            <person name="James K.D."/>
            <person name="Eisen J.A."/>
            <person name="Rutherford K.M."/>
            <person name="Salzberg S.L."/>
            <person name="Craig A."/>
            <person name="Kyes S."/>
            <person name="Chan M.-S."/>
            <person name="Nene V."/>
            <person name="Shallom S.J."/>
            <person name="Suh B."/>
            <person name="Peterson J."/>
            <person name="Angiuoli S."/>
            <person name="Pertea M."/>
            <person name="Allen J."/>
            <person name="Selengut J."/>
            <person name="Haft D."/>
            <person name="Mather M.W."/>
            <person name="Vaidya A.B."/>
            <person name="Martin D.M.A."/>
            <person name="Fairlamb A.H."/>
            <person name="Fraunholz M.J."/>
            <person name="Roos D.S."/>
            <person name="Ralph S.A."/>
            <person name="McFadden G.I."/>
            <person name="Cummings L.M."/>
            <person name="Subramanian G.M."/>
            <person name="Mungall C."/>
            <person name="Venter J.C."/>
            <person name="Carucci D.J."/>
            <person name="Hoffman S.L."/>
            <person name="Newbold C."/>
            <person name="Davis R.W."/>
            <person name="Fraser C.M."/>
            <person name="Barrell B.G."/>
        </authorList>
    </citation>
    <scope>NUCLEOTIDE SEQUENCE [LARGE SCALE GENOMIC DNA]</scope>
    <source>
        <strain evidence="5">3D7</strain>
    </source>
</reference>
<reference evidence="5" key="2">
    <citation type="journal article" date="2002" name="Nature">
        <title>Sequence of Plasmodium falciparum chromosomes 1, 3-9 and 13.</title>
        <authorList>
            <person name="Hall N."/>
            <person name="Pain A."/>
            <person name="Berriman M."/>
            <person name="Churcher C.M."/>
            <person name="Harris B."/>
            <person name="Harris D."/>
            <person name="Mungall K.L."/>
            <person name="Bowman S."/>
            <person name="Atkin R."/>
            <person name="Baker S."/>
            <person name="Barron A."/>
            <person name="Brooks K."/>
            <person name="Buckee C.O."/>
            <person name="Burrows C."/>
            <person name="Cherevach I."/>
            <person name="Chillingworth C."/>
            <person name="Chillingworth T."/>
            <person name="Christodoulou Z."/>
            <person name="Clark L."/>
            <person name="Clark R."/>
            <person name="Corton C."/>
            <person name="Cronin A."/>
            <person name="Davies R.M."/>
            <person name="Davis P."/>
            <person name="Dear P."/>
            <person name="Dearden F."/>
            <person name="Doggett J."/>
            <person name="Feltwell T."/>
            <person name="Goble A."/>
            <person name="Goodhead I."/>
            <person name="Gwilliam R."/>
            <person name="Hamlin N."/>
            <person name="Hance Z."/>
            <person name="Harper D."/>
            <person name="Hauser H."/>
            <person name="Hornsby T."/>
            <person name="Holroyd S."/>
            <person name="Horrocks P."/>
            <person name="Humphray S."/>
            <person name="Jagels K."/>
            <person name="James K.D."/>
            <person name="Johnson D."/>
            <person name="Kerhornou A."/>
            <person name="Knights A."/>
            <person name="Konfortov B."/>
            <person name="Kyes S."/>
            <person name="Larke N."/>
            <person name="Lawson D."/>
            <person name="Lennard N."/>
            <person name="Line A."/>
            <person name="Maddison M."/>
            <person name="Mclean J."/>
            <person name="Mooney P."/>
            <person name="Moule S."/>
            <person name="Murphy L."/>
            <person name="Oliver K."/>
            <person name="Ormond D."/>
            <person name="Price C."/>
            <person name="Quail M.A."/>
            <person name="Rabbinowitsch E."/>
            <person name="Rajandream M.A."/>
            <person name="Rutter S."/>
            <person name="Rutherford K.M."/>
            <person name="Sanders M."/>
            <person name="Simmonds M."/>
            <person name="Seeger K."/>
            <person name="Sharp S."/>
            <person name="Smith R."/>
            <person name="Squares R."/>
            <person name="Squares S."/>
            <person name="Stevens K."/>
            <person name="Taylor K."/>
            <person name="Tivey A."/>
            <person name="Unwin L."/>
            <person name="Whitehead S."/>
            <person name="Woodward J.R."/>
            <person name="Sulston J.E."/>
            <person name="Craig A."/>
            <person name="Newbold C."/>
            <person name="Barrell B.G."/>
        </authorList>
    </citation>
    <scope>NUCLEOTIDE SEQUENCE [LARGE SCALE GENOMIC DNA]</scope>
    <source>
        <strain evidence="5">3D7</strain>
    </source>
</reference>
<reference evidence="4" key="3">
    <citation type="journal article" date="2007" name="PLoS ONE">
        <title>Rapid identification of malaria vaccine candidates based on alpha-helical coiled coil protein motif.</title>
        <authorList>
            <person name="Villard V."/>
            <person name="Agak G.W."/>
            <person name="Frank G."/>
            <person name="Jafarshad A."/>
            <person name="Servis C."/>
            <person name="Nebie I."/>
            <person name="Sirima S.B."/>
            <person name="Felger I."/>
            <person name="Arevalo-Herrera M."/>
            <person name="Herrera S."/>
            <person name="Heitz F."/>
            <person name="Baecker V."/>
            <person name="Druilhe P."/>
            <person name="Kajava A.V."/>
            <person name="Corradin G."/>
        </authorList>
    </citation>
    <scope>SYNTHESIS OF 779-832</scope>
    <scope>POSSIBLE CANDIDATE MALARIA EPITOPE</scope>
</reference>
<feature type="chain" id="PRO_0000388769" description="Uncharacterized membrane protein">
    <location>
        <begin position="1"/>
        <end position="3459"/>
    </location>
</feature>
<feature type="transmembrane region" description="Helical" evidence="1">
    <location>
        <begin position="1059"/>
        <end position="1079"/>
    </location>
</feature>
<feature type="transmembrane region" description="Helical" evidence="1">
    <location>
        <begin position="2059"/>
        <end position="2079"/>
    </location>
</feature>
<feature type="transmembrane region" description="Helical" evidence="1">
    <location>
        <begin position="2197"/>
        <end position="2217"/>
    </location>
</feature>
<feature type="transmembrane region" description="Helical" evidence="1">
    <location>
        <begin position="3229"/>
        <end position="3249"/>
    </location>
</feature>
<feature type="transmembrane region" description="Helical" evidence="1">
    <location>
        <begin position="3296"/>
        <end position="3316"/>
    </location>
</feature>
<feature type="region of interest" description="Disordered" evidence="2">
    <location>
        <begin position="158"/>
        <end position="230"/>
    </location>
</feature>
<feature type="region of interest" description="Disordered" evidence="2">
    <location>
        <begin position="400"/>
        <end position="447"/>
    </location>
</feature>
<feature type="region of interest" description="Disordered" evidence="2">
    <location>
        <begin position="1148"/>
        <end position="1187"/>
    </location>
</feature>
<feature type="region of interest" description="Disordered" evidence="2">
    <location>
        <begin position="1399"/>
        <end position="1467"/>
    </location>
</feature>
<feature type="region of interest" description="Disordered" evidence="2">
    <location>
        <begin position="1711"/>
        <end position="1733"/>
    </location>
</feature>
<feature type="region of interest" description="Disordered" evidence="2">
    <location>
        <begin position="2582"/>
        <end position="2644"/>
    </location>
</feature>
<feature type="region of interest" description="Disordered" evidence="2">
    <location>
        <begin position="2776"/>
        <end position="2835"/>
    </location>
</feature>
<feature type="coiled-coil region" evidence="1">
    <location>
        <begin position="771"/>
        <end position="851"/>
    </location>
</feature>
<feature type="coiled-coil region" evidence="1">
    <location>
        <begin position="2785"/>
        <end position="2820"/>
    </location>
</feature>
<feature type="compositionally biased region" description="Acidic residues" evidence="2">
    <location>
        <begin position="158"/>
        <end position="167"/>
    </location>
</feature>
<feature type="compositionally biased region" description="Basic and acidic residues" evidence="2">
    <location>
        <begin position="168"/>
        <end position="184"/>
    </location>
</feature>
<feature type="compositionally biased region" description="Low complexity" evidence="2">
    <location>
        <begin position="185"/>
        <end position="201"/>
    </location>
</feature>
<feature type="compositionally biased region" description="Basic and acidic residues" evidence="2">
    <location>
        <begin position="204"/>
        <end position="221"/>
    </location>
</feature>
<feature type="compositionally biased region" description="Acidic residues" evidence="2">
    <location>
        <begin position="406"/>
        <end position="443"/>
    </location>
</feature>
<feature type="compositionally biased region" description="Basic and acidic residues" evidence="2">
    <location>
        <begin position="1404"/>
        <end position="1463"/>
    </location>
</feature>
<feature type="compositionally biased region" description="Acidic residues" evidence="2">
    <location>
        <begin position="2592"/>
        <end position="2629"/>
    </location>
</feature>
<feature type="compositionally biased region" description="Basic and acidic residues" evidence="2">
    <location>
        <begin position="2779"/>
        <end position="2821"/>
    </location>
</feature>
<evidence type="ECO:0000255" key="1"/>
<evidence type="ECO:0000256" key="2">
    <source>
        <dbReference type="SAM" id="MobiDB-lite"/>
    </source>
</evidence>
<evidence type="ECO:0000269" key="3">
    <source>
    </source>
</evidence>
<evidence type="ECO:0000305" key="4"/>
<evidence type="ECO:0000312" key="5">
    <source>
        <dbReference type="Proteomes" id="UP000001450"/>
    </source>
</evidence>
<accession>Q8IBP1</accession>
<accession>A0A143ZWQ6</accession>
<organism evidence="5">
    <name type="scientific">Plasmodium falciparum (isolate 3D7)</name>
    <dbReference type="NCBI Taxonomy" id="36329"/>
    <lineage>
        <taxon>Eukaryota</taxon>
        <taxon>Sar</taxon>
        <taxon>Alveolata</taxon>
        <taxon>Apicomplexa</taxon>
        <taxon>Aconoidasida</taxon>
        <taxon>Haemosporida</taxon>
        <taxon>Plasmodiidae</taxon>
        <taxon>Plasmodium</taxon>
        <taxon>Plasmodium (Laverania)</taxon>
    </lineage>
</organism>
<dbReference type="EMBL" id="AL844506">
    <property type="protein sequence ID" value="CZT62677.1"/>
    <property type="molecule type" value="Genomic_DNA"/>
</dbReference>
<dbReference type="BioGRID" id="1209987">
    <property type="interactions" value="11"/>
</dbReference>
<dbReference type="FunCoup" id="Q8IBP1">
    <property type="interactions" value="745"/>
</dbReference>
<dbReference type="IntAct" id="Q8IBP1">
    <property type="interactions" value="9"/>
</dbReference>
<dbReference type="STRING" id="36329.A0A143ZWQ6"/>
<dbReference type="PaxDb" id="5833-PF07_0086"/>
<dbReference type="EnsemblProtists" id="CZT62677">
    <property type="protein sequence ID" value="CZT62677"/>
    <property type="gene ID" value="PF3D7_0721000"/>
</dbReference>
<dbReference type="VEuPathDB" id="PlasmoDB:PF3D7_0721000"/>
<dbReference type="HOGENOM" id="CLU_224933_0_0_1"/>
<dbReference type="InParanoid" id="Q8IBP1"/>
<dbReference type="OrthoDB" id="370976at2759"/>
<dbReference type="Proteomes" id="UP000001450">
    <property type="component" value="Chromosome 7"/>
</dbReference>
<dbReference type="GO" id="GO:0005737">
    <property type="term" value="C:cytoplasm"/>
    <property type="evidence" value="ECO:0000303"/>
    <property type="project" value="UniProtKB"/>
</dbReference>
<dbReference type="GO" id="GO:0016020">
    <property type="term" value="C:membrane"/>
    <property type="evidence" value="ECO:0000303"/>
    <property type="project" value="UniProtKB"/>
</dbReference>
<dbReference type="InterPro" id="IPR038841">
    <property type="entry name" value="PF07_0086"/>
</dbReference>
<dbReference type="PANTHER" id="PTHR34740">
    <property type="entry name" value="FINGER, C3HC4 TYPE, PUTATIVE-RELATED-RELATED"/>
    <property type="match status" value="1"/>
</dbReference>
<dbReference type="PANTHER" id="PTHR34740:SF5">
    <property type="entry name" value="POLYMERASE NUCLEOTIDYL TRANSFERASE DOMAIN-CONTAINING PROTEIN"/>
    <property type="match status" value="1"/>
</dbReference>
<name>YPF16_PLAF7</name>
<comment type="subcellular location">
    <subcellularLocation>
        <location evidence="1">Membrane</location>
        <topology evidence="1">Multi-pass membrane protein</topology>
    </subcellularLocation>
</comment>
<comment type="biotechnology">
    <text evidence="3">Possible candidate for an effective malaria vaccine as determined by epitope response in sera.</text>
</comment>
<proteinExistence type="evidence at protein level"/>
<sequence length="3459" mass="420421">MVIDNEEKKKKWEYATDEYKTCSNNIDEDILKDDKDVSYFEKVKSSDNVLKYDECSPLKEKDTSYKGEHIKRGQFCKNKNNIYSDDDNNNIYNDDDNNNIYNDDDNNIYSCNNSYVSTHFGNTKRSDDMNNAENKKKKNEKDLFYDKVDEILNRQSDNDDDWIFNEDDEKKNKNNDGNDNRYDYNDLQNNNNNDNNKYDYNFYDDEKKNKNNDGDDNKYDYNHLQNNNNNKYDYNFDDDEKKKSHTPFDFYQEERQNKAYFLNIHTLNFEAHMLHALLKKNKYRLTKYNTNMNNMIYKYLYLYKKKKSLKYKHLKEQSYNNYTKHKTYNYHHTNEKEKKKNTHVDKQKIYVDDNKGNVSPEQVIHNKIENMEKDDKGKFNKTDQTNKLLNIDYYNKNNKYGYITPDNDDGDDYNDDNDNDDNYNDDNYNDDNYNDDNYNDDNYNDEKKKKKNNLMDVHFLYMEYFIRKKKLTELTNIYNKYIYNKDNLLYLKKWYLKNVYILNSKGYDESNIRISDPKKIYEYNNINNNCSDIPGGENSDTSYYFSPPSIKTYCLNNYFICLLSKNNEIIVIGYKFINIHNLIFFKENNNIDDFFFKTEGPININFNYYKYPHYAVIKNDLWKNIKNIKNIHINDKNKLCVNTSNCVYVFEIFLSNSKVKYKYLYNYIEKGTFLNKENNISSSLHIKEKKLLYFTPYNIIYLNNNKNIFNSSITITKDIKFKYKILNTSFYKNNIYMVISYFNKITVFKNEAIYFVLQYDRNGDVVSEQEVNEKKKGENEMNKEVNKMNEEVNKMNEEVNKMNEEVNKMNKEVNKMDEEVNKMNKEVNKMNKESNEMNKEANEMNKDEENEKYENHNYNYENNICINTNGYDKKGEDEEKYNLKDDYISYIPFLGILENNHFCAAYGKTLTVFEYVSKVVIKYKYILNHSIYFFKSCDNNIIIIYDKYKLYVYQIMLKGDSNFCILLLYEKKMNNVTSRVISEGYNIYESYDGFIQVNKKNVKVNKNDKIANFMFSLFNQDIVLNEQNSKKDVSFFYINLIYIYVLNNDKVDIIVINSLIYMIYLFFTYKKYDLLLMFILHLYNGDVCVLSDFSLKEEEKKIQIQKLLFFFFETQMRDIIQNYKDYKEKQIHNNDYFIKYRGDQNEGRRQEKVLNNKDNNDKNDKNDKNDKNDKNDKNEKNEKNDYDKRSEYISYEYTPLRDITYTVSSLSSTLSCSLSGDEKKEEDSIMSLSKEDDRYHKYIIDDQDSYNLYRHYNNTNHYEYIKNKKEVILKDEEEDIYINNKIINKECIEELIHLCYLSIELSIKFNINLYEYTFHLFKIYNIENVYFYICEPYIINKKICLTHHSLIYNLVQYFKRFYSIFCLYDDTYYDLFLFFCTLLTSKGGDEIIKGHKGIIPTQGDKNETDEGNKNETDEGDKNETDEGDKNETDEGNKNETEEIYKNETDEGNKNETEEIYKNDNDDDNYDDDYYHHYGEHHHYDSIMNNGYLTKFIFLLKIQNKREHYELNYPHNHNTVPYKKKEKMDNMYHSNLMICEDKSKEYINEELITFDYYFINKYLNIKKNFKQIKKIYCFICIINKFCKFFENINLEKNLENIISLLPLHISSYLYNKHNEDKTTICEFFISYMIRKKNIFFFQFCIDNNIKNEMFPIYIPMYIFNNFYQTHFFLYYLYCVIFKKQFSIHMDTYVNEKRHMVYIKDMYVLKKKQKKKGNNQKQNHNYNDDINNKENNNNNNVPLHRICIDDSSYYDKVFFVYSPLLYEKEQNYGINKNIVTLIEYMCKRYDKKCLHIKEEKDILSGLFFKELNVIEGNYMPRFEENKNKNDKIKDDNYGNNDKRCGKKCVKKCEKKCEKKCEKKCEKKCEKKCEKKCEKKCEKKCEKKCEKKCEKKCEKKCEKKCEKKCNHYDLDEKKYDQHDLCDQKYDQHDLCDQKYDQHDLCDQKYDQTCNILNNNIYYKDETNLTMRFPLKVEKEHNNVPNMNNGSNIYKNVNTYNNFDNIKKIENITYEGANKLDMLKKGENINLFINKINCKSKMENILKEFNINDFFNLDKNGMFLLFQMSLSNCFYIMNNIFFFYHHNNNNMDRSSNYLINIFIENILEFYIHLNVTYVHYKNKLYFILQENVENLKDIYKHIIYKINTCVHYDEIRNFALKMKNFIIISSDIRSVQNNKMLTLIPWIIFQLFFIKNHMKKIIQCTTYMFLLFFIFSTDFLFDECINIYFIHLLMQFENKKYKKFNLAHRNNNNDNDNNDHTDRMRMRYYDDNNNNNDHTDRMRMRYYDDNNNNDHTDRMRMRYYDDNNNNDHTDRMRMRYYDHRHNNINISIFNYQLYKKQKEKFHKFLSTFNYQKDIYDNNFIKIFHLKKKNIFLKKKTILYNLEMFRNELDFNIITYIMKRLYSFDLSYLLNLFSTDSTYNHMESHNPETYVRSTNTKEDIQKNLYIPDKTNYSFKNICNVNYNNNNNNNNNNNNNEHAKNGSPNKDVYCNITNKINLLNKKKETKISIFKGGHKHVVNKKKKKKDIPLSNKRMEKKKNKINNICSINFCRNQLRYILLLYVKRLIMVLEGLKKNEHEKNDGRIYKDNINNADDNNDDDNINDDDNINDDDNINDDDNNNDDDNNNDDNNDDNNINNDNNDDDNNNNNNIYNNYYHNKKELILNIMKYILFFSCTKKYTNVCLLLFDYFGYYNVVIQYYKKYKLNDLYEYIYFKIYSFYKETRLKKRIYGYLFYTTLLKNITSLNNLFVHYILNNYFFFHSKSMYMLKKRKKKKIQKGRIWKREENGEKKKNEKNESEKNERNEKNEKNEKHEKHEKHEKNEKNGSVNMIKCKDKGDKNDEHNIERFGKKQMKEFMVMSYPERTIQYKEENILSFKNDILYNKDVCNNINKYNNKKYCKNLSLYHVKNYFFHISLYFIKSLLCSRNNFNDLIKMRIYFLLLYKIKFVRKIKSYLFKKHFVKYIDLLCKYNKDKVYKCVKSINCETYISIYEKHHNINVILYIYEKQGKFFKVIQICLKEIKNNISKLYNILKKFFKNNNNNNKKKKNKKKNIYIKSFFFSTKVTYDDMFCINFDHHVDIYNFYKIPLKKKITKCLFCSCKEKTQQIVKDKNLFIQKMFGDLNYISKERSFFLECFVINKRRRGMATCVRSEDIPNVMDIKKGHDHMSINKSTNEYLNKRKNQENYHNLQNTYCNLHSCYEKGIHWSNRYGKYNNCENIKGHKKRLIKSRWLFIIKEYNNIFLYIYMLSFILKKNKITNNKINEYIISYILNQCINGYINIHEKVINSTLNKKKKKKKLLFFFNYIFEQIILFVININSYNHTQNVCQKILSQYKQKFDIKLIKMPIIQVLKNLCDTYMFFNDTNEIAQKNIKESMKYYSYQKKKGLIINFEQSNHKHKFNMNLDKKSYVLSLNKQNLNHTITKSYFSQPSNIIYIYKCDHSNHFACTNLCYVCDYESAQEI</sequence>
<keyword id="KW-0175">Coiled coil</keyword>
<keyword id="KW-0472">Membrane</keyword>
<keyword id="KW-0477">Merozoite</keyword>
<keyword id="KW-1185">Reference proteome</keyword>
<keyword id="KW-0812">Transmembrane</keyword>
<keyword id="KW-1133">Transmembrane helix</keyword>
<gene>
    <name type="ORF">PF07_0086</name>
    <name type="ORF">PF3D7_0721000</name>
</gene>